<reference key="1">
    <citation type="journal article" date="1996" name="Nucleic Acids Res.">
        <title>Complete sequence analysis of the genome of the bacterium Mycoplasma pneumoniae.</title>
        <authorList>
            <person name="Himmelreich R."/>
            <person name="Hilbert H."/>
            <person name="Plagens H."/>
            <person name="Pirkl E."/>
            <person name="Li B.-C."/>
            <person name="Herrmann R."/>
        </authorList>
    </citation>
    <scope>NUCLEOTIDE SEQUENCE [LARGE SCALE GENOMIC DNA]</scope>
    <source>
        <strain>ATCC 29342 / M129 / Subtype 1</strain>
    </source>
</reference>
<feature type="chain" id="PRO_0000204583" description="DNA polymerase III PolC-type">
    <location>
        <begin position="1"/>
        <end position="1443"/>
    </location>
</feature>
<feature type="domain" description="Exonuclease">
    <location>
        <begin position="408"/>
        <end position="567"/>
    </location>
</feature>
<sequence>MVFDTETEKGKRIWALSQFLVKKNILDHNELHQLNNRIELVYLENDRENALFLVALTLKKPLTIDIWNALYEGFQDAEGAELRITFQEDATFFKDGSTKSSVTLAIIKDYFKSFFGKDKKYRILLEQELTHPNFLSYSNHELKANCQSQELDQWLIEQRQAFIKWMHQAGFTHFGFVSLFNPPAEKQLKVKSMKVSKYDKQFETEVFSTEFVPIHKINQQMDEIKLMGQIFELKDFPGYNNLRNTLNIYVTDFQLGGSLILKWFYKDPKTIEGIKIGTWVKATVKVERDAKTQLLQGIIKEISPIETPAYYRRPDQDKQKRVELVFHTKMSAFDGINSVQEYAQFAKERDWKTIAVTDKDNIHIYPTLYEVAKKYGLKAIYGLECNLIDDHIKIVSNPDKTKLKDATFVIFDIETTGLHGRYDSVIEFAGIKVKHNREVERMQFFLKIDGPLPAAVTEITKITQAQLEDGMEQQAGLEKLRAWLDGCVMVAHNGLSFDLPFLQTQFEKYNIAPLTNPLIDTLALSWALNPGFASHTLSNICAKLKFDFDDERLHRADYDTQALKKVFDYFKEQVELMGITNLEQLDQELNQQCHFELLKRTFTNTGIIYIKSQSGFAKLYELLSIALTDNNATRPLVLTSTLQKFAKSFVITDNPVQGDIFKAALTKPLKELEAAIKRVDFVLIAPPGAYAGYTIREGLKKEAIPNAIKLVVDTAQRLNKLVAVASDAYFIHPWENEYYKAIVCAKGLGGRWHRHFNYKEREQRVPNVFVRTTGEMLNEMSFLGEQLAYELVVENTNKLAKQLTADDLVPVQTKLQPPVIEGSNENLAAKTWSQAKAIYGDPLPKLIEQRIQEELKAIIDNGFGIIYWISHLLVKQSVQDGYFVGPRGSIGSSLVANLIGISEINPLVPHYLCESCQYFEVNEEVDDGYDLMVRDCPKCGAKAAFKGDGHNIPFATFMGFAGDKIPDIDLNFSSEYQAKAHAYVRELFGEQYTFRAGTIATVAEKTAYGYARNYFEIIKQTELATAPEIERFKQKLVGIKRTTGQHPGGIMIFPNHKSVYEFTPCGYPADDTSSDWKTTHFEYDALGNTILKLDILGQDDPTMLKHLGDLTHVNPQNIPRFDKKLTEMFWSVNPLKLKPHYLDEPTGAIGIPEFGTKFVRKILEQTKPKGFGDLIRVSGLSHGKNVWADNAQKILKDQNLSLKDVIACRDDIMLYLIHKGMQAKDAFEIMEKVRKGIALNAKEVQLMQSNGVEQHWINSCLKISYLFPKAHAAAYVLMAWRIAWFKLYHPLSYYACLLSFKLKEHDVSGFKSGVSFVKQKLEELNTLYRIKRIKPKEAELLTSYEVYLEMMARGIKLEQISLTHSHATRFVEHNGMLIAPFITIPGMGEAVANSIIEARNEKPFSSLDDFKKRTKITKKHIEAFTQMQLLDEFREQDNQKKLF</sequence>
<evidence type="ECO:0000255" key="1">
    <source>
        <dbReference type="HAMAP-Rule" id="MF_00356"/>
    </source>
</evidence>
<accession>P75080</accession>
<keyword id="KW-0963">Cytoplasm</keyword>
<keyword id="KW-0235">DNA replication</keyword>
<keyword id="KW-0239">DNA-directed DNA polymerase</keyword>
<keyword id="KW-0269">Exonuclease</keyword>
<keyword id="KW-0378">Hydrolase</keyword>
<keyword id="KW-0540">Nuclease</keyword>
<keyword id="KW-0548">Nucleotidyltransferase</keyword>
<keyword id="KW-1185">Reference proteome</keyword>
<keyword id="KW-0808">Transferase</keyword>
<protein>
    <recommendedName>
        <fullName evidence="1">DNA polymerase III PolC-type</fullName>
        <shortName evidence="1">PolIII</shortName>
        <ecNumber evidence="1">2.7.7.7</ecNumber>
    </recommendedName>
</protein>
<gene>
    <name evidence="1" type="primary">polC</name>
    <name type="ordered locus">MPN_034</name>
    <name type="ORF">MP120</name>
</gene>
<name>DPO3_MYCPN</name>
<proteinExistence type="evidence at protein level"/>
<dbReference type="EC" id="2.7.7.7" evidence="1"/>
<dbReference type="EMBL" id="U00089">
    <property type="protein sequence ID" value="AAB95768.1"/>
    <property type="molecule type" value="Genomic_DNA"/>
</dbReference>
<dbReference type="PIR" id="S73446">
    <property type="entry name" value="S73446"/>
</dbReference>
<dbReference type="RefSeq" id="NP_109722.1">
    <property type="nucleotide sequence ID" value="NC_000912.1"/>
</dbReference>
<dbReference type="RefSeq" id="WP_010874391.1">
    <property type="nucleotide sequence ID" value="NC_000912.1"/>
</dbReference>
<dbReference type="SMR" id="P75080"/>
<dbReference type="IntAct" id="P75080">
    <property type="interactions" value="4"/>
</dbReference>
<dbReference type="STRING" id="272634.MPN_034"/>
<dbReference type="EnsemblBacteria" id="AAB95768">
    <property type="protein sequence ID" value="AAB95768"/>
    <property type="gene ID" value="MPN_034"/>
</dbReference>
<dbReference type="KEGG" id="mpn:MPN_034"/>
<dbReference type="PATRIC" id="fig|272634.6.peg.33"/>
<dbReference type="HOGENOM" id="CLU_003297_1_0_14"/>
<dbReference type="OrthoDB" id="9804290at2"/>
<dbReference type="BioCyc" id="MPNE272634:G1GJ3-48-MONOMER"/>
<dbReference type="Proteomes" id="UP000000808">
    <property type="component" value="Chromosome"/>
</dbReference>
<dbReference type="GO" id="GO:0005737">
    <property type="term" value="C:cytoplasm"/>
    <property type="evidence" value="ECO:0007669"/>
    <property type="project" value="UniProtKB-SubCell"/>
</dbReference>
<dbReference type="GO" id="GO:0008408">
    <property type="term" value="F:3'-5' exonuclease activity"/>
    <property type="evidence" value="ECO:0007669"/>
    <property type="project" value="UniProtKB-UniRule"/>
</dbReference>
<dbReference type="GO" id="GO:0003677">
    <property type="term" value="F:DNA binding"/>
    <property type="evidence" value="ECO:0007669"/>
    <property type="project" value="UniProtKB-UniRule"/>
</dbReference>
<dbReference type="GO" id="GO:0003887">
    <property type="term" value="F:DNA-directed DNA polymerase activity"/>
    <property type="evidence" value="ECO:0007669"/>
    <property type="project" value="UniProtKB-UniRule"/>
</dbReference>
<dbReference type="GO" id="GO:0006261">
    <property type="term" value="P:DNA-templated DNA replication"/>
    <property type="evidence" value="ECO:0007669"/>
    <property type="project" value="UniProtKB-UniRule"/>
</dbReference>
<dbReference type="CDD" id="cd06127">
    <property type="entry name" value="DEDDh"/>
    <property type="match status" value="1"/>
</dbReference>
<dbReference type="CDD" id="cd04484">
    <property type="entry name" value="polC_OBF"/>
    <property type="match status" value="1"/>
</dbReference>
<dbReference type="FunFam" id="3.30.420.10:FF:000045">
    <property type="entry name" value="3'-5' exonuclease DinG"/>
    <property type="match status" value="1"/>
</dbReference>
<dbReference type="Gene3D" id="1.10.150.870">
    <property type="match status" value="1"/>
</dbReference>
<dbReference type="Gene3D" id="3.30.1900.20">
    <property type="match status" value="2"/>
</dbReference>
<dbReference type="Gene3D" id="3.20.20.140">
    <property type="entry name" value="Metal-dependent hydrolases"/>
    <property type="match status" value="1"/>
</dbReference>
<dbReference type="Gene3D" id="2.40.50.140">
    <property type="entry name" value="Nucleic acid-binding proteins"/>
    <property type="match status" value="1"/>
</dbReference>
<dbReference type="Gene3D" id="1.10.150.700">
    <property type="entry name" value="PolC, middle finger domain"/>
    <property type="match status" value="2"/>
</dbReference>
<dbReference type="Gene3D" id="3.30.420.10">
    <property type="entry name" value="Ribonuclease H-like superfamily/Ribonuclease H"/>
    <property type="match status" value="1"/>
</dbReference>
<dbReference type="HAMAP" id="MF_00356">
    <property type="entry name" value="DNApol_PolC"/>
    <property type="match status" value="1"/>
</dbReference>
<dbReference type="InterPro" id="IPR011708">
    <property type="entry name" value="DNA_pol3_alpha_NTPase_dom"/>
</dbReference>
<dbReference type="InterPro" id="IPR040982">
    <property type="entry name" value="DNA_pol3_finger"/>
</dbReference>
<dbReference type="InterPro" id="IPR004805">
    <property type="entry name" value="DnaE2/DnaE/PolC"/>
</dbReference>
<dbReference type="InterPro" id="IPR029460">
    <property type="entry name" value="DNAPol_HHH"/>
</dbReference>
<dbReference type="InterPro" id="IPR006054">
    <property type="entry name" value="DnaQ"/>
</dbReference>
<dbReference type="InterPro" id="IPR013520">
    <property type="entry name" value="Exonuclease_RNaseT/DNA_pol3"/>
</dbReference>
<dbReference type="InterPro" id="IPR012340">
    <property type="entry name" value="NA-bd_OB-fold"/>
</dbReference>
<dbReference type="InterPro" id="IPR004013">
    <property type="entry name" value="PHP_dom"/>
</dbReference>
<dbReference type="InterPro" id="IPR003141">
    <property type="entry name" value="Pol/His_phosphatase_N"/>
</dbReference>
<dbReference type="InterPro" id="IPR006308">
    <property type="entry name" value="Pol_III_a_PolC-type_gram_pos"/>
</dbReference>
<dbReference type="InterPro" id="IPR044923">
    <property type="entry name" value="PolC_middle_finger_sf"/>
</dbReference>
<dbReference type="InterPro" id="IPR012337">
    <property type="entry name" value="RNaseH-like_sf"/>
</dbReference>
<dbReference type="InterPro" id="IPR036397">
    <property type="entry name" value="RNaseH_sf"/>
</dbReference>
<dbReference type="NCBIfam" id="TIGR00573">
    <property type="entry name" value="dnaq"/>
    <property type="match status" value="1"/>
</dbReference>
<dbReference type="NCBIfam" id="TIGR01405">
    <property type="entry name" value="polC_Gram_pos"/>
    <property type="match status" value="1"/>
</dbReference>
<dbReference type="NCBIfam" id="NF001688">
    <property type="entry name" value="PRK00448.1"/>
    <property type="match status" value="1"/>
</dbReference>
<dbReference type="PANTHER" id="PTHR32294:SF5">
    <property type="entry name" value="DNA POLYMERASE III POLC-TYPE"/>
    <property type="match status" value="1"/>
</dbReference>
<dbReference type="PANTHER" id="PTHR32294">
    <property type="entry name" value="DNA POLYMERASE III SUBUNIT ALPHA"/>
    <property type="match status" value="1"/>
</dbReference>
<dbReference type="Pfam" id="PF07733">
    <property type="entry name" value="DNA_pol3_alpha"/>
    <property type="match status" value="1"/>
</dbReference>
<dbReference type="Pfam" id="PF17657">
    <property type="entry name" value="DNA_pol3_finger"/>
    <property type="match status" value="1"/>
</dbReference>
<dbReference type="Pfam" id="PF14579">
    <property type="entry name" value="HHH_6"/>
    <property type="match status" value="1"/>
</dbReference>
<dbReference type="Pfam" id="PF02811">
    <property type="entry name" value="PHP"/>
    <property type="match status" value="1"/>
</dbReference>
<dbReference type="Pfam" id="PF00929">
    <property type="entry name" value="RNase_T"/>
    <property type="match status" value="1"/>
</dbReference>
<dbReference type="SMART" id="SM00479">
    <property type="entry name" value="EXOIII"/>
    <property type="match status" value="1"/>
</dbReference>
<dbReference type="SMART" id="SM00481">
    <property type="entry name" value="POLIIIAc"/>
    <property type="match status" value="1"/>
</dbReference>
<dbReference type="SUPFAM" id="SSF160975">
    <property type="entry name" value="AF1531-like"/>
    <property type="match status" value="1"/>
</dbReference>
<dbReference type="SUPFAM" id="SSF53098">
    <property type="entry name" value="Ribonuclease H-like"/>
    <property type="match status" value="1"/>
</dbReference>
<organism>
    <name type="scientific">Mycoplasma pneumoniae (strain ATCC 29342 / M129 / Subtype 1)</name>
    <name type="common">Mycoplasmoides pneumoniae</name>
    <dbReference type="NCBI Taxonomy" id="272634"/>
    <lineage>
        <taxon>Bacteria</taxon>
        <taxon>Bacillati</taxon>
        <taxon>Mycoplasmatota</taxon>
        <taxon>Mycoplasmoidales</taxon>
        <taxon>Mycoplasmoidaceae</taxon>
        <taxon>Mycoplasmoides</taxon>
    </lineage>
</organism>
<comment type="function">
    <text evidence="1">Required for replicative DNA synthesis. This DNA polymerase also exhibits 3' to 5' exonuclease activity.</text>
</comment>
<comment type="catalytic activity">
    <reaction evidence="1">
        <text>DNA(n) + a 2'-deoxyribonucleoside 5'-triphosphate = DNA(n+1) + diphosphate</text>
        <dbReference type="Rhea" id="RHEA:22508"/>
        <dbReference type="Rhea" id="RHEA-COMP:17339"/>
        <dbReference type="Rhea" id="RHEA-COMP:17340"/>
        <dbReference type="ChEBI" id="CHEBI:33019"/>
        <dbReference type="ChEBI" id="CHEBI:61560"/>
        <dbReference type="ChEBI" id="CHEBI:173112"/>
        <dbReference type="EC" id="2.7.7.7"/>
    </reaction>
</comment>
<comment type="interaction">
    <interactant intactId="EBI-2258713">
        <id>P75080</id>
    </interactant>
    <interactant intactId="EBI-2258718">
        <id>P78014</id>
        <label>recA</label>
    </interactant>
    <organismsDiffer>false</organismsDiffer>
    <experiments>3</experiments>
</comment>
<comment type="subcellular location">
    <subcellularLocation>
        <location evidence="1">Cytoplasm</location>
    </subcellularLocation>
</comment>
<comment type="similarity">
    <text evidence="1">Belongs to the DNA polymerase type-C family. PolC subfamily.</text>
</comment>